<accession>Q0VAW7</accession>
<accession>D3Z7D1</accession>
<accession>E9QP25</accession>
<accession>Q9R163</accession>
<organism>
    <name type="scientific">Mus musculus</name>
    <name type="common">Mouse</name>
    <dbReference type="NCBI Taxonomy" id="10090"/>
    <lineage>
        <taxon>Eukaryota</taxon>
        <taxon>Metazoa</taxon>
        <taxon>Chordata</taxon>
        <taxon>Craniata</taxon>
        <taxon>Vertebrata</taxon>
        <taxon>Euteleostomi</taxon>
        <taxon>Mammalia</taxon>
        <taxon>Eutheria</taxon>
        <taxon>Euarchontoglires</taxon>
        <taxon>Glires</taxon>
        <taxon>Rodentia</taxon>
        <taxon>Myomorpha</taxon>
        <taxon>Muroidea</taxon>
        <taxon>Muridae</taxon>
        <taxon>Murinae</taxon>
        <taxon>Mus</taxon>
        <taxon>Mus</taxon>
    </lineage>
</organism>
<keyword id="KW-0025">Alternative splicing</keyword>
<keyword id="KW-0238">DNA-binding</keyword>
<keyword id="KW-0479">Metal-binding</keyword>
<keyword id="KW-0539">Nucleus</keyword>
<keyword id="KW-1185">Reference proteome</keyword>
<keyword id="KW-0677">Repeat</keyword>
<keyword id="KW-0804">Transcription</keyword>
<keyword id="KW-0805">Transcription regulation</keyword>
<keyword id="KW-0862">Zinc</keyword>
<keyword id="KW-0863">Zinc-finger</keyword>
<proteinExistence type="evidence at transcript level"/>
<name>ZN112_MOUSE</name>
<protein>
    <recommendedName>
        <fullName evidence="11">Zinc finger protein 112</fullName>
        <shortName>Zfp-112</shortName>
    </recommendedName>
</protein>
<sequence>MTKLQEMVTFRDVAVVFSEEELGLLDAAQWKLYREVMLENFRMLLSVAHQPFKPGLIAQLENGEQLWMVEAEAHAGGLSGRRNGHAVENAEDVEVNSLCPEDLSFCQTWPWGACTLPSGQEFIKRCQGSNGESQSQEASPRLVWAGMPMQISEDGNYGLPPAHEDSASMKNQEFPPPRSQQSQGEPYLGRPCVTCQWKGQQTSIRNHFCRYGSVCWSPYHSDNEELYSKGKSYGFHDDRGKTVKVLLLNQDFIELGPEPCPRTKNREAWGHDNDHSSHTHQQCHSRGKPCTRSLSGEGCGDRSALHGHPGLEAGDEGADGSPPLQSSPRVCMEQVPRECSGNVHYGSPLNTCGCAHPGNTSQTCSIPKQAVGSPVHCNSTFRAHPREEPNNYEENRNVFNQSSCLQVSRKIGAEEKLCQGVECRKNFTHCSSLNIPHRVPVEETLCNPDCGNHFSLPPHFQDFPGVRAREQPHNRLCRTGFSQTLCLQGHQKLHIREKPSHREGGSGCNWSSTPKDPQKQKLHKCNACGKGFSHRSVLDIHHRIHTGEKPYKCEECGKGFSRSAYLQGHQRVHTGEKPYKCEECGKGFSRSSHLQGHQRVHTGEKPYKCEECGKGFSWSFNLQIHQRVHTGEKPYKCGECGKGFSKASTLLAHERVHTGEKPYQCHECGKNFSQKSYLQSHQSVHSGERPHICEVCGKGFSQRAYLQGHLRVHTRVKPYKCEVCGKGFSQGSRLEAHQRVHTGRKPFKCETCTKGFSESSRLQAHQRIHEEGRPYKCDQCGKGFSGYSSLQAHHRVHTGEKPYKCEVCGKGFSQRSNLQAHQRVHTGEKPYTCDACGKGFRWSSGLLIHQRAHSSDTFYRSGECGSSYPPENLCRNEGL</sequence>
<dbReference type="EMBL" id="AF167319">
    <property type="protein sequence ID" value="AAD45928.1"/>
    <property type="molecule type" value="mRNA"/>
</dbReference>
<dbReference type="EMBL" id="AC138791">
    <property type="status" value="NOT_ANNOTATED_CDS"/>
    <property type="molecule type" value="Genomic_DNA"/>
</dbReference>
<dbReference type="EMBL" id="BC120886">
    <property type="protein sequence ID" value="AAI20887.1"/>
    <property type="molecule type" value="mRNA"/>
</dbReference>
<dbReference type="CCDS" id="CCDS39824.1">
    <molecule id="Q0VAW7-1"/>
</dbReference>
<dbReference type="RefSeq" id="NP_067282.2">
    <molecule id="Q0VAW7-1"/>
    <property type="nucleotide sequence ID" value="NM_021307.2"/>
</dbReference>
<dbReference type="RefSeq" id="XP_011248963.1">
    <property type="nucleotide sequence ID" value="XM_011250661.1"/>
</dbReference>
<dbReference type="SMR" id="Q0VAW7"/>
<dbReference type="STRING" id="10090.ENSMUSP00000005413"/>
<dbReference type="iPTMnet" id="Q0VAW7"/>
<dbReference type="PhosphoSitePlus" id="Q0VAW7"/>
<dbReference type="PaxDb" id="10090-ENSMUSP00000005413"/>
<dbReference type="DNASU" id="57745"/>
<dbReference type="Ensembl" id="ENSMUST00000005413.4">
    <molecule id="Q0VAW7-1"/>
    <property type="protein sequence ID" value="ENSMUSP00000005413.4"/>
    <property type="gene ID" value="ENSMUSG00000052675.12"/>
</dbReference>
<dbReference type="Ensembl" id="ENSMUST00000120006.8">
    <molecule id="Q0VAW7-2"/>
    <property type="protein sequence ID" value="ENSMUSP00000113031.2"/>
    <property type="gene ID" value="ENSMUSG00000052675.12"/>
</dbReference>
<dbReference type="GeneID" id="57745"/>
<dbReference type="KEGG" id="mmu:57745"/>
<dbReference type="UCSC" id="uc009fou.1">
    <molecule id="Q0VAW7-1"/>
    <property type="organism name" value="mouse"/>
</dbReference>
<dbReference type="AGR" id="MGI:1929115"/>
<dbReference type="CTD" id="57745"/>
<dbReference type="MGI" id="MGI:1929115">
    <property type="gene designation" value="Zfp112"/>
</dbReference>
<dbReference type="VEuPathDB" id="HostDB:ENSMUSG00000052675"/>
<dbReference type="eggNOG" id="KOG1721">
    <property type="taxonomic scope" value="Eukaryota"/>
</dbReference>
<dbReference type="GeneTree" id="ENSGT00940000162215"/>
<dbReference type="HOGENOM" id="CLU_002678_31_0_1"/>
<dbReference type="InParanoid" id="Q0VAW7"/>
<dbReference type="OMA" id="NYTLTHI"/>
<dbReference type="OrthoDB" id="9411774at2759"/>
<dbReference type="PhylomeDB" id="Q0VAW7"/>
<dbReference type="TreeFam" id="TF350845"/>
<dbReference type="Reactome" id="R-MMU-212436">
    <property type="pathway name" value="Generic Transcription Pathway"/>
</dbReference>
<dbReference type="BioGRID-ORCS" id="57745">
    <property type="hits" value="2 hits in 77 CRISPR screens"/>
</dbReference>
<dbReference type="PRO" id="PR:Q0VAW7"/>
<dbReference type="Proteomes" id="UP000000589">
    <property type="component" value="Chromosome 7"/>
</dbReference>
<dbReference type="RNAct" id="Q0VAW7">
    <property type="molecule type" value="protein"/>
</dbReference>
<dbReference type="Bgee" id="ENSMUSG00000052675">
    <property type="expression patterns" value="Expressed in metanephric loop of Henle and 100 other cell types or tissues"/>
</dbReference>
<dbReference type="ExpressionAtlas" id="Q0VAW7">
    <property type="expression patterns" value="baseline and differential"/>
</dbReference>
<dbReference type="GO" id="GO:0005634">
    <property type="term" value="C:nucleus"/>
    <property type="evidence" value="ECO:0007669"/>
    <property type="project" value="UniProtKB-SubCell"/>
</dbReference>
<dbReference type="GO" id="GO:0003677">
    <property type="term" value="F:DNA binding"/>
    <property type="evidence" value="ECO:0007669"/>
    <property type="project" value="UniProtKB-KW"/>
</dbReference>
<dbReference type="GO" id="GO:0008270">
    <property type="term" value="F:zinc ion binding"/>
    <property type="evidence" value="ECO:0007669"/>
    <property type="project" value="UniProtKB-KW"/>
</dbReference>
<dbReference type="GO" id="GO:0006355">
    <property type="term" value="P:regulation of DNA-templated transcription"/>
    <property type="evidence" value="ECO:0007669"/>
    <property type="project" value="InterPro"/>
</dbReference>
<dbReference type="CDD" id="cd07765">
    <property type="entry name" value="KRAB_A-box"/>
    <property type="match status" value="1"/>
</dbReference>
<dbReference type="FunFam" id="3.30.160.60:FF:000274">
    <property type="entry name" value="zinc finger protein 16"/>
    <property type="match status" value="2"/>
</dbReference>
<dbReference type="FunFam" id="3.30.160.60:FF:002343">
    <property type="entry name" value="Zinc finger protein 33A"/>
    <property type="match status" value="2"/>
</dbReference>
<dbReference type="FunFam" id="3.30.160.60:FF:001498">
    <property type="entry name" value="Zinc finger protein 404"/>
    <property type="match status" value="1"/>
</dbReference>
<dbReference type="FunFam" id="3.30.160.60:FF:000663">
    <property type="entry name" value="Zinc finger protein 45"/>
    <property type="match status" value="3"/>
</dbReference>
<dbReference type="FunFam" id="3.30.160.60:FF:002090">
    <property type="entry name" value="Zinc finger protein 473"/>
    <property type="match status" value="1"/>
</dbReference>
<dbReference type="FunFam" id="3.30.160.60:FF:000624">
    <property type="entry name" value="zinc finger protein 697"/>
    <property type="match status" value="1"/>
</dbReference>
<dbReference type="FunFam" id="3.30.160.60:FF:002357">
    <property type="entry name" value="Zinc finger protein 782"/>
    <property type="match status" value="1"/>
</dbReference>
<dbReference type="FunFam" id="3.30.160.60:FF:000102">
    <property type="entry name" value="zinc finger protein 850 isoform X1"/>
    <property type="match status" value="1"/>
</dbReference>
<dbReference type="Gene3D" id="6.10.140.140">
    <property type="match status" value="1"/>
</dbReference>
<dbReference type="Gene3D" id="3.30.160.60">
    <property type="entry name" value="Classic Zinc Finger"/>
    <property type="match status" value="12"/>
</dbReference>
<dbReference type="InterPro" id="IPR050589">
    <property type="entry name" value="Ikaros_C2H2-ZF"/>
</dbReference>
<dbReference type="InterPro" id="IPR001909">
    <property type="entry name" value="KRAB"/>
</dbReference>
<dbReference type="InterPro" id="IPR036051">
    <property type="entry name" value="KRAB_dom_sf"/>
</dbReference>
<dbReference type="InterPro" id="IPR036236">
    <property type="entry name" value="Znf_C2H2_sf"/>
</dbReference>
<dbReference type="InterPro" id="IPR013087">
    <property type="entry name" value="Znf_C2H2_type"/>
</dbReference>
<dbReference type="PANTHER" id="PTHR24404:SF107">
    <property type="entry name" value="ZFP2 ZINC FINGER PROTEIN"/>
    <property type="match status" value="1"/>
</dbReference>
<dbReference type="PANTHER" id="PTHR24404">
    <property type="entry name" value="ZINC FINGER PROTEIN"/>
    <property type="match status" value="1"/>
</dbReference>
<dbReference type="Pfam" id="PF01352">
    <property type="entry name" value="KRAB"/>
    <property type="match status" value="1"/>
</dbReference>
<dbReference type="Pfam" id="PF00096">
    <property type="entry name" value="zf-C2H2"/>
    <property type="match status" value="10"/>
</dbReference>
<dbReference type="SMART" id="SM00349">
    <property type="entry name" value="KRAB"/>
    <property type="match status" value="1"/>
</dbReference>
<dbReference type="SMART" id="SM00355">
    <property type="entry name" value="ZnF_C2H2"/>
    <property type="match status" value="12"/>
</dbReference>
<dbReference type="SUPFAM" id="SSF57667">
    <property type="entry name" value="beta-beta-alpha zinc fingers"/>
    <property type="match status" value="8"/>
</dbReference>
<dbReference type="SUPFAM" id="SSF109640">
    <property type="entry name" value="KRAB domain (Kruppel-associated box)"/>
    <property type="match status" value="1"/>
</dbReference>
<dbReference type="PROSITE" id="PS50805">
    <property type="entry name" value="KRAB"/>
    <property type="match status" value="1"/>
</dbReference>
<dbReference type="PROSITE" id="PS00028">
    <property type="entry name" value="ZINC_FINGER_C2H2_1"/>
    <property type="match status" value="12"/>
</dbReference>
<dbReference type="PROSITE" id="PS50157">
    <property type="entry name" value="ZINC_FINGER_C2H2_2"/>
    <property type="match status" value="12"/>
</dbReference>
<feature type="chain" id="PRO_0000351148" description="Zinc finger protein 112">
    <location>
        <begin position="1"/>
        <end position="879"/>
    </location>
</feature>
<feature type="domain" description="KRAB" evidence="4">
    <location>
        <begin position="8"/>
        <end position="79"/>
    </location>
</feature>
<feature type="zinc finger region" description="C2H2-type 1" evidence="3">
    <location>
        <begin position="524"/>
        <end position="546"/>
    </location>
</feature>
<feature type="zinc finger region" description="C2H2-type 2" evidence="3">
    <location>
        <begin position="552"/>
        <end position="573"/>
    </location>
</feature>
<feature type="zinc finger region" description="C2H2-type 3" evidence="3">
    <location>
        <begin position="579"/>
        <end position="601"/>
    </location>
</feature>
<feature type="zinc finger region" description="C2H2-type 4" evidence="3">
    <location>
        <begin position="607"/>
        <end position="629"/>
    </location>
</feature>
<feature type="zinc finger region" description="C2H2-type 5" evidence="3">
    <location>
        <begin position="635"/>
        <end position="657"/>
    </location>
</feature>
<feature type="zinc finger region" description="C2H2-type 6" evidence="3">
    <location>
        <begin position="663"/>
        <end position="685"/>
    </location>
</feature>
<feature type="zinc finger region" description="C2H2-type 7" evidence="3">
    <location>
        <begin position="691"/>
        <end position="713"/>
    </location>
</feature>
<feature type="zinc finger region" description="C2H2-type 8" evidence="3">
    <location>
        <begin position="719"/>
        <end position="741"/>
    </location>
</feature>
<feature type="zinc finger region" description="C2H2-type 9" evidence="3">
    <location>
        <begin position="747"/>
        <end position="769"/>
    </location>
</feature>
<feature type="zinc finger region" description="C2H2-type 10" evidence="3">
    <location>
        <begin position="775"/>
        <end position="797"/>
    </location>
</feature>
<feature type="zinc finger region" description="C2H2-type 11" evidence="3">
    <location>
        <begin position="803"/>
        <end position="825"/>
    </location>
</feature>
<feature type="zinc finger region" description="C2H2-type 12" evidence="3">
    <location>
        <begin position="831"/>
        <end position="853"/>
    </location>
</feature>
<feature type="region of interest" description="Disordered" evidence="5">
    <location>
        <begin position="153"/>
        <end position="185"/>
    </location>
</feature>
<feature type="region of interest" description="Disordered" evidence="5">
    <location>
        <begin position="263"/>
        <end position="289"/>
    </location>
</feature>
<feature type="region of interest" description="Disordered" evidence="5">
    <location>
        <begin position="301"/>
        <end position="329"/>
    </location>
</feature>
<feature type="region of interest" description="Disordered" evidence="5">
    <location>
        <begin position="497"/>
        <end position="521"/>
    </location>
</feature>
<feature type="compositionally biased region" description="Basic and acidic residues" evidence="5">
    <location>
        <begin position="264"/>
        <end position="277"/>
    </location>
</feature>
<feature type="splice variant" id="VSP_052946" description="In isoform 2." evidence="8">
    <location>
        <begin position="1"/>
        <end position="6"/>
    </location>
</feature>
<feature type="sequence conflict" description="In Ref. 1; AAD45928 and 3; AAI20887." evidence="9" ref="1 3">
    <original>G</original>
    <variation>R</variation>
    <location>
        <position position="155"/>
    </location>
</feature>
<feature type="sequence conflict" description="In Ref. 1; AAD45928 and 3; AAI20887." evidence="9" ref="1 3">
    <original>D</original>
    <variation>DD</variation>
    <location>
        <position position="272"/>
    </location>
</feature>
<feature type="sequence conflict" description="In Ref. 1; AAD45928." evidence="9" ref="1">
    <original>R</original>
    <variation>G</variation>
    <location>
        <position position="571"/>
    </location>
</feature>
<feature type="sequence conflict" description="In Ref. 1; AAD45928 and 3; AAI20887." evidence="9" ref="1 3">
    <original>Q</original>
    <variation>R</variation>
    <location>
        <position position="738"/>
    </location>
</feature>
<gene>
    <name type="primary">Znf112</name>
    <name type="synonym">Zfp112</name>
</gene>
<evidence type="ECO:0000250" key="1"/>
<evidence type="ECO:0000255" key="2"/>
<evidence type="ECO:0000255" key="3">
    <source>
        <dbReference type="PROSITE-ProRule" id="PRU00042"/>
    </source>
</evidence>
<evidence type="ECO:0000255" key="4">
    <source>
        <dbReference type="PROSITE-ProRule" id="PRU00119"/>
    </source>
</evidence>
<evidence type="ECO:0000256" key="5">
    <source>
        <dbReference type="SAM" id="MobiDB-lite"/>
    </source>
</evidence>
<evidence type="ECO:0000269" key="6">
    <source>
    </source>
</evidence>
<evidence type="ECO:0000269" key="7">
    <source>
    </source>
</evidence>
<evidence type="ECO:0000303" key="8">
    <source>
    </source>
</evidence>
<evidence type="ECO:0000305" key="9"/>
<evidence type="ECO:0000312" key="10">
    <source>
        <dbReference type="EMBL" id="AAD45928.1"/>
    </source>
</evidence>
<evidence type="ECO:0000312" key="11">
    <source>
        <dbReference type="EMBL" id="AAI20887.1"/>
    </source>
</evidence>
<reference evidence="9 10" key="1">
    <citation type="journal article" date="2003" name="Genome Res.">
        <title>Differential expansion of zinc-finger transcription factor loci in homologous human and mouse gene clusters.</title>
        <authorList>
            <person name="Shannon M."/>
            <person name="Hamilton A.T."/>
            <person name="Gordon L."/>
            <person name="Branscomb E."/>
            <person name="Stubbs L."/>
        </authorList>
    </citation>
    <scope>NUCLEOTIDE SEQUENCE [MRNA] (ISOFORM 2)</scope>
</reference>
<reference key="2">
    <citation type="journal article" date="2009" name="PLoS Biol.">
        <title>Lineage-specific biology revealed by a finished genome assembly of the mouse.</title>
        <authorList>
            <person name="Church D.M."/>
            <person name="Goodstadt L."/>
            <person name="Hillier L.W."/>
            <person name="Zody M.C."/>
            <person name="Goldstein S."/>
            <person name="She X."/>
            <person name="Bult C.J."/>
            <person name="Agarwala R."/>
            <person name="Cherry J.L."/>
            <person name="DiCuccio M."/>
            <person name="Hlavina W."/>
            <person name="Kapustin Y."/>
            <person name="Meric P."/>
            <person name="Maglott D."/>
            <person name="Birtle Z."/>
            <person name="Marques A.C."/>
            <person name="Graves T."/>
            <person name="Zhou S."/>
            <person name="Teague B."/>
            <person name="Potamousis K."/>
            <person name="Churas C."/>
            <person name="Place M."/>
            <person name="Herschleb J."/>
            <person name="Runnheim R."/>
            <person name="Forrest D."/>
            <person name="Amos-Landgraf J."/>
            <person name="Schwartz D.C."/>
            <person name="Cheng Z."/>
            <person name="Lindblad-Toh K."/>
            <person name="Eichler E.E."/>
            <person name="Ponting C.P."/>
        </authorList>
    </citation>
    <scope>NUCLEOTIDE SEQUENCE [LARGE SCALE GENOMIC DNA]</scope>
    <source>
        <strain>C57BL/6J</strain>
    </source>
</reference>
<reference evidence="9 11" key="3">
    <citation type="journal article" date="2004" name="Genome Res.">
        <title>The status, quality, and expansion of the NIH full-length cDNA project: the Mammalian Gene Collection (MGC).</title>
        <authorList>
            <consortium name="The MGC Project Team"/>
        </authorList>
    </citation>
    <scope>NUCLEOTIDE SEQUENCE [LARGE SCALE MRNA] (ISOFORM 1)</scope>
</reference>
<comment type="function">
    <text evidence="1">May be involved in transcriptional regulation.</text>
</comment>
<comment type="subcellular location">
    <subcellularLocation>
        <location evidence="9">Nucleus</location>
    </subcellularLocation>
</comment>
<comment type="alternative products">
    <event type="alternative splicing"/>
    <isoform>
        <id>Q0VAW7-1</id>
        <name evidence="7">1</name>
        <sequence type="displayed"/>
    </isoform>
    <isoform>
        <id>Q0VAW7-2</id>
        <name evidence="6">2</name>
        <sequence type="described" ref="VSP_052946"/>
    </isoform>
</comment>
<comment type="similarity">
    <text evidence="2">Belongs to the krueppel C2H2-type zinc-finger protein family.</text>
</comment>